<proteinExistence type="inferred from homology"/>
<sequence length="548" mass="62737">MDDYEKSKVLTKRYKKLKKLLKMVYGYDNFRPRQYEIINKVINGEDVCAILMTSAGKSLCFQIPALYLDKPAIIISPLISLMEDQRLILEKLGISSCCYNSNVENKAQMRKDIMQFKYKFIYVSPESVVHLKDLIVKLEDFQGISLIAIDEAHCISAYGFDFRTAYREITFFKEILPNVPILALTATATNIVAKDICKVLQLKTNEPIKASFDRPNLYLEVRTKSKNPANDIVPIINKYPNQSVIIYCLTKKETQKIADILTVHKVVCGIYHAGLSNEHKTKTHTNFINNKIKIVVATIAFGMGINKPDVRVVIHYGAPKNIEGYYQEIGRAGRDGEKSYCYAFYNFQDFMIQRRFISQNNNPNYQKTQLALLEQMKKYVTLRTCRRKILLEYFDEETKEKCDFCDNCCGVHKNIVNENVTSKQNVQSEAKLIIELIESIPNRNFGVNMYINILRGSKNKAISPAIRKNKYYGLGSKHSSEWWKEVFDNLIKQGFLQSVSLKTGKFPIQVVKVTNKGVTWVSMADLGSLLDNIDNSVKLDPVEMVASV</sequence>
<gene>
    <name type="ordered locus">MIMI_R290</name>
</gene>
<keyword id="KW-0067">ATP-binding</keyword>
<keyword id="KW-0347">Helicase</keyword>
<keyword id="KW-0378">Hydrolase</keyword>
<keyword id="KW-0547">Nucleotide-binding</keyword>
<keyword id="KW-1185">Reference proteome</keyword>
<feature type="chain" id="PRO_0000253409" description="Putative ATP-dependent RNA helicase R290">
    <location>
        <begin position="1"/>
        <end position="548"/>
    </location>
</feature>
<feature type="domain" description="Helicase ATP-binding" evidence="1">
    <location>
        <begin position="38"/>
        <end position="206"/>
    </location>
</feature>
<feature type="domain" description="Helicase C-terminal" evidence="2">
    <location>
        <begin position="231"/>
        <end position="376"/>
    </location>
</feature>
<feature type="short sequence motif" description="DEAH box">
    <location>
        <begin position="150"/>
        <end position="153"/>
    </location>
</feature>
<feature type="binding site" evidence="1">
    <location>
        <begin position="51"/>
        <end position="58"/>
    </location>
    <ligand>
        <name>ATP</name>
        <dbReference type="ChEBI" id="CHEBI:30616"/>
    </ligand>
</feature>
<dbReference type="EC" id="3.6.4.13"/>
<dbReference type="EMBL" id="AY653733">
    <property type="protein sequence ID" value="AAV50562.1"/>
    <property type="molecule type" value="Genomic_DNA"/>
</dbReference>
<dbReference type="SMR" id="Q5UPX0"/>
<dbReference type="KEGG" id="vg:9924905"/>
<dbReference type="OrthoDB" id="3320at10239"/>
<dbReference type="Proteomes" id="UP000001134">
    <property type="component" value="Genome"/>
</dbReference>
<dbReference type="GO" id="GO:0043138">
    <property type="term" value="F:3'-5' DNA helicase activity"/>
    <property type="evidence" value="ECO:0007669"/>
    <property type="project" value="InterPro"/>
</dbReference>
<dbReference type="GO" id="GO:0005524">
    <property type="term" value="F:ATP binding"/>
    <property type="evidence" value="ECO:0007669"/>
    <property type="project" value="UniProtKB-KW"/>
</dbReference>
<dbReference type="GO" id="GO:0016887">
    <property type="term" value="F:ATP hydrolysis activity"/>
    <property type="evidence" value="ECO:0007669"/>
    <property type="project" value="RHEA"/>
</dbReference>
<dbReference type="GO" id="GO:0009378">
    <property type="term" value="F:four-way junction helicase activity"/>
    <property type="evidence" value="ECO:0007669"/>
    <property type="project" value="TreeGrafter"/>
</dbReference>
<dbReference type="GO" id="GO:0003676">
    <property type="term" value="F:nucleic acid binding"/>
    <property type="evidence" value="ECO:0007669"/>
    <property type="project" value="InterPro"/>
</dbReference>
<dbReference type="GO" id="GO:0003724">
    <property type="term" value="F:RNA helicase activity"/>
    <property type="evidence" value="ECO:0007669"/>
    <property type="project" value="UniProtKB-EC"/>
</dbReference>
<dbReference type="GO" id="GO:0006260">
    <property type="term" value="P:DNA replication"/>
    <property type="evidence" value="ECO:0007669"/>
    <property type="project" value="InterPro"/>
</dbReference>
<dbReference type="GO" id="GO:0000724">
    <property type="term" value="P:double-strand break repair via homologous recombination"/>
    <property type="evidence" value="ECO:0007669"/>
    <property type="project" value="TreeGrafter"/>
</dbReference>
<dbReference type="CDD" id="cd17920">
    <property type="entry name" value="DEXHc_RecQ"/>
    <property type="match status" value="1"/>
</dbReference>
<dbReference type="CDD" id="cd18794">
    <property type="entry name" value="SF2_C_RecQ"/>
    <property type="match status" value="1"/>
</dbReference>
<dbReference type="FunFam" id="3.40.50.300:FF:001456">
    <property type="entry name" value="ATP-dependent DNA helicase"/>
    <property type="match status" value="1"/>
</dbReference>
<dbReference type="Gene3D" id="3.40.50.300">
    <property type="entry name" value="P-loop containing nucleotide triphosphate hydrolases"/>
    <property type="match status" value="2"/>
</dbReference>
<dbReference type="Gene3D" id="1.10.10.10">
    <property type="entry name" value="Winged helix-like DNA-binding domain superfamily/Winged helix DNA-binding domain"/>
    <property type="match status" value="1"/>
</dbReference>
<dbReference type="InterPro" id="IPR011545">
    <property type="entry name" value="DEAD/DEAH_box_helicase_dom"/>
</dbReference>
<dbReference type="InterPro" id="IPR004589">
    <property type="entry name" value="DNA_helicase_ATP-dep_RecQ"/>
</dbReference>
<dbReference type="InterPro" id="IPR014001">
    <property type="entry name" value="Helicase_ATP-bd"/>
</dbReference>
<dbReference type="InterPro" id="IPR001650">
    <property type="entry name" value="Helicase_C-like"/>
</dbReference>
<dbReference type="InterPro" id="IPR027417">
    <property type="entry name" value="P-loop_NTPase"/>
</dbReference>
<dbReference type="InterPro" id="IPR032284">
    <property type="entry name" value="RecQ_Zn-bd"/>
</dbReference>
<dbReference type="InterPro" id="IPR018982">
    <property type="entry name" value="RQC_domain"/>
</dbReference>
<dbReference type="InterPro" id="IPR036388">
    <property type="entry name" value="WH-like_DNA-bd_sf"/>
</dbReference>
<dbReference type="InterPro" id="IPR036390">
    <property type="entry name" value="WH_DNA-bd_sf"/>
</dbReference>
<dbReference type="NCBIfam" id="TIGR00614">
    <property type="entry name" value="recQ_fam"/>
    <property type="match status" value="1"/>
</dbReference>
<dbReference type="PANTHER" id="PTHR13710:SF120">
    <property type="entry name" value="BIFUNCTIONAL 3'-5' EXONUCLEASE_ATP-DEPENDENT HELICASE WRN"/>
    <property type="match status" value="1"/>
</dbReference>
<dbReference type="PANTHER" id="PTHR13710">
    <property type="entry name" value="DNA HELICASE RECQ FAMILY MEMBER"/>
    <property type="match status" value="1"/>
</dbReference>
<dbReference type="Pfam" id="PF00270">
    <property type="entry name" value="DEAD"/>
    <property type="match status" value="1"/>
</dbReference>
<dbReference type="Pfam" id="PF00271">
    <property type="entry name" value="Helicase_C"/>
    <property type="match status" value="1"/>
</dbReference>
<dbReference type="Pfam" id="PF16124">
    <property type="entry name" value="RecQ_Zn_bind"/>
    <property type="match status" value="1"/>
</dbReference>
<dbReference type="Pfam" id="PF09382">
    <property type="entry name" value="RQC"/>
    <property type="match status" value="1"/>
</dbReference>
<dbReference type="SMART" id="SM00487">
    <property type="entry name" value="DEXDc"/>
    <property type="match status" value="1"/>
</dbReference>
<dbReference type="SMART" id="SM00490">
    <property type="entry name" value="HELICc"/>
    <property type="match status" value="1"/>
</dbReference>
<dbReference type="SMART" id="SM00956">
    <property type="entry name" value="RQC"/>
    <property type="match status" value="1"/>
</dbReference>
<dbReference type="SUPFAM" id="SSF52540">
    <property type="entry name" value="P-loop containing nucleoside triphosphate hydrolases"/>
    <property type="match status" value="1"/>
</dbReference>
<dbReference type="SUPFAM" id="SSF46785">
    <property type="entry name" value="Winged helix' DNA-binding domain"/>
    <property type="match status" value="1"/>
</dbReference>
<dbReference type="PROSITE" id="PS51192">
    <property type="entry name" value="HELICASE_ATP_BIND_1"/>
    <property type="match status" value="1"/>
</dbReference>
<dbReference type="PROSITE" id="PS51194">
    <property type="entry name" value="HELICASE_CTER"/>
    <property type="match status" value="1"/>
</dbReference>
<evidence type="ECO:0000255" key="1">
    <source>
        <dbReference type="PROSITE-ProRule" id="PRU00541"/>
    </source>
</evidence>
<evidence type="ECO:0000255" key="2">
    <source>
        <dbReference type="PROSITE-ProRule" id="PRU00542"/>
    </source>
</evidence>
<evidence type="ECO:0000305" key="3"/>
<reference key="1">
    <citation type="journal article" date="2004" name="Science">
        <title>The 1.2-megabase genome sequence of Mimivirus.</title>
        <authorList>
            <person name="Raoult D."/>
            <person name="Audic S."/>
            <person name="Robert C."/>
            <person name="Abergel C."/>
            <person name="Renesto P."/>
            <person name="Ogata H."/>
            <person name="La Scola B."/>
            <person name="Susan M."/>
            <person name="Claverie J.-M."/>
        </authorList>
    </citation>
    <scope>NUCLEOTIDE SEQUENCE [GENOMIC DNA]</scope>
    <source>
        <strain>Rowbotham-Bradford</strain>
    </source>
</reference>
<organism>
    <name type="scientific">Acanthamoeba polyphaga mimivirus</name>
    <name type="common">APMV</name>
    <dbReference type="NCBI Taxonomy" id="212035"/>
    <lineage>
        <taxon>Viruses</taxon>
        <taxon>Varidnaviria</taxon>
        <taxon>Bamfordvirae</taxon>
        <taxon>Nucleocytoviricota</taxon>
        <taxon>Megaviricetes</taxon>
        <taxon>Imitervirales</taxon>
        <taxon>Mimiviridae</taxon>
        <taxon>Megamimivirinae</taxon>
        <taxon>Mimivirus</taxon>
        <taxon>Mimivirus bradfordmassiliense</taxon>
    </lineage>
</organism>
<comment type="catalytic activity">
    <reaction>
        <text>ATP + H2O = ADP + phosphate + H(+)</text>
        <dbReference type="Rhea" id="RHEA:13065"/>
        <dbReference type="ChEBI" id="CHEBI:15377"/>
        <dbReference type="ChEBI" id="CHEBI:15378"/>
        <dbReference type="ChEBI" id="CHEBI:30616"/>
        <dbReference type="ChEBI" id="CHEBI:43474"/>
        <dbReference type="ChEBI" id="CHEBI:456216"/>
        <dbReference type="EC" id="3.6.4.13"/>
    </reaction>
</comment>
<comment type="similarity">
    <text evidence="3">Belongs to the DEAD box helicase family. DEAH subfamily.</text>
</comment>
<protein>
    <recommendedName>
        <fullName>Putative ATP-dependent RNA helicase R290</fullName>
        <ecNumber>3.6.4.13</ecNumber>
    </recommendedName>
</protein>
<name>YR290_MIMIV</name>
<accession>Q5UPX0</accession>
<organismHost>
    <name type="scientific">Acanthamoeba polyphaga</name>
    <name type="common">Amoeba</name>
    <dbReference type="NCBI Taxonomy" id="5757"/>
</organismHost>